<proteinExistence type="evidence at protein level"/>
<organism>
    <name type="scientific">Salmonella dublin</name>
    <dbReference type="NCBI Taxonomy" id="98360"/>
    <lineage>
        <taxon>Bacteria</taxon>
        <taxon>Pseudomonadati</taxon>
        <taxon>Pseudomonadota</taxon>
        <taxon>Gammaproteobacteria</taxon>
        <taxon>Enterobacterales</taxon>
        <taxon>Enterobacteriaceae</taxon>
        <taxon>Salmonella</taxon>
    </lineage>
</organism>
<dbReference type="EMBL" id="M84973">
    <property type="protein sequence ID" value="AAA27081.1"/>
    <property type="molecule type" value="Genomic_DNA"/>
</dbReference>
<dbReference type="EMBL" id="Z15067">
    <property type="protein sequence ID" value="CAA78776.1"/>
    <property type="molecule type" value="Genomic_DNA"/>
</dbReference>
<dbReference type="RefSeq" id="WP_000079834.1">
    <property type="nucleotide sequence ID" value="NZ_VDCP01000004.1"/>
</dbReference>
<dbReference type="PDB" id="3V47">
    <property type="method" value="X-ray"/>
    <property type="resolution" value="2.47 A"/>
    <property type="chains" value="C/D=48-466"/>
</dbReference>
<dbReference type="PDBsum" id="3V47"/>
<dbReference type="SMR" id="Q06971"/>
<dbReference type="OMA" id="IASQTTY"/>
<dbReference type="EvolutionaryTrace" id="Q06971"/>
<dbReference type="GO" id="GO:0009288">
    <property type="term" value="C:bacterial-type flagellum"/>
    <property type="evidence" value="ECO:0007669"/>
    <property type="project" value="UniProtKB-SubCell"/>
</dbReference>
<dbReference type="GO" id="GO:0005576">
    <property type="term" value="C:extracellular region"/>
    <property type="evidence" value="ECO:0007669"/>
    <property type="project" value="UniProtKB-SubCell"/>
</dbReference>
<dbReference type="GO" id="GO:0005198">
    <property type="term" value="F:structural molecule activity"/>
    <property type="evidence" value="ECO:0007669"/>
    <property type="project" value="InterPro"/>
</dbReference>
<dbReference type="Gene3D" id="6.10.280.190">
    <property type="match status" value="1"/>
</dbReference>
<dbReference type="Gene3D" id="2.30.220.10">
    <property type="entry name" value="f41 fragment of flagellin, C-terminal domain"/>
    <property type="match status" value="1"/>
</dbReference>
<dbReference type="Gene3D" id="2.170.280.10">
    <property type="entry name" value="f41 fragment of flagellin, middle domain"/>
    <property type="match status" value="1"/>
</dbReference>
<dbReference type="Gene3D" id="1.20.1330.10">
    <property type="entry name" value="f41 fragment of flagellin, N-terminal domain"/>
    <property type="match status" value="1"/>
</dbReference>
<dbReference type="Gene3D" id="6.10.10.10">
    <property type="entry name" value="Flagellar export chaperone, C-terminal domain"/>
    <property type="match status" value="1"/>
</dbReference>
<dbReference type="InterPro" id="IPR001492">
    <property type="entry name" value="Flagellin"/>
</dbReference>
<dbReference type="InterPro" id="IPR046358">
    <property type="entry name" value="Flagellin_C"/>
</dbReference>
<dbReference type="InterPro" id="IPR042187">
    <property type="entry name" value="Flagellin_C_sub2"/>
</dbReference>
<dbReference type="InterPro" id="IPR001029">
    <property type="entry name" value="Flagellin_N"/>
</dbReference>
<dbReference type="PANTHER" id="PTHR42792">
    <property type="entry name" value="FLAGELLIN"/>
    <property type="match status" value="1"/>
</dbReference>
<dbReference type="PANTHER" id="PTHR42792:SF2">
    <property type="entry name" value="FLAGELLIN"/>
    <property type="match status" value="1"/>
</dbReference>
<dbReference type="Pfam" id="PF00700">
    <property type="entry name" value="Flagellin_C"/>
    <property type="match status" value="1"/>
</dbReference>
<dbReference type="Pfam" id="PF00669">
    <property type="entry name" value="Flagellin_N"/>
    <property type="match status" value="1"/>
</dbReference>
<dbReference type="Pfam" id="PF22370">
    <property type="entry name" value="FliC-like_3rd"/>
    <property type="match status" value="1"/>
</dbReference>
<dbReference type="PRINTS" id="PR00207">
    <property type="entry name" value="FLAGELLIN"/>
</dbReference>
<dbReference type="SUPFAM" id="SSF64518">
    <property type="entry name" value="Phase 1 flagellin"/>
    <property type="match status" value="1"/>
</dbReference>
<comment type="function">
    <text>Flagellin is the subunit protein which polymerizes to form the filaments of bacterial flagella.</text>
</comment>
<comment type="subcellular location">
    <subcellularLocation>
        <location>Secreted</location>
    </subcellularLocation>
    <subcellularLocation>
        <location>Bacterial flagellum</location>
    </subcellularLocation>
</comment>
<comment type="miscellaneous">
    <text>Individual Salmonella serotypes usually alternate between the production of 2 antigenic forms of flagella, termed phase 1 and phase 2, each specified by separate structural genes.</text>
</comment>
<comment type="similarity">
    <text evidence="2">Belongs to the bacterial flagellin family.</text>
</comment>
<gene>
    <name type="primary">fliC</name>
    <name type="synonym">fliC1</name>
</gene>
<evidence type="ECO:0000250" key="1"/>
<evidence type="ECO:0000305" key="2"/>
<evidence type="ECO:0007829" key="3">
    <source>
        <dbReference type="PDB" id="3V47"/>
    </source>
</evidence>
<sequence>MAQVINTNSLSLLTQNNLNKSQSSLSSAIERLSSGLRINSAKDDAAGQAIANRFTSNIKGLTQASRNANDGISIAQTTEGALNEINNNLQRVRELSVQATNGTNSDSDLKSIQDEIQQRLEEIDRVSNQTQFNGVKVLSQDNQMKIQVGANDGETITIDLQKIDVKSLGLDGFNVNGPKEATVGDLKSSFKNVTGYDTYAAGADKYRVDINSGAVVTDAVAPDKVYVNAANGQLTTDDAENNTAVDLFKTTKSTAGTAEAKAIAGAIKGGKEGDTFDYKGVTFTIDTKTGDDGNGKVSTTINGEKVTLTVADIAIGAADVNAATLQSSKNVYTSVVNGQFTFDDKTKNESAKLSDLEANNAVKGESKITVNGAEYTANATGDKITLAGKTMFIDKTASGVSTLINEDAAAAKKSTANPLASIDSALSKVDAVRSSLGAIQNRFDSAITNLGNTVTNLNSARSRIEDADYATEVSNMSKAQILQQAGTSVLAQANQVPQNVLSLLR</sequence>
<accession>Q06971</accession>
<name>FLIC_SALDU</name>
<reference key="1">
    <citation type="journal article" date="1992" name="J. Bacteriol.">
        <title>Molecular evolutionary genetics of the cattle-adapted serovar Salmonella dublin.</title>
        <authorList>
            <person name="Selander R.K."/>
            <person name="Smith N.H."/>
            <person name="Li J."/>
            <person name="Beltran P."/>
            <person name="Ferris K.E."/>
            <person name="Kopecko D.J."/>
            <person name="Rubin F.A."/>
        </authorList>
    </citation>
    <scope>NUCLEOTIDE SEQUENCE [GENOMIC DNA]</scope>
</reference>
<reference key="2">
    <citation type="journal article" date="1993" name="J. Bacteriol.">
        <title>Molecular analyses of the Salmonella g. flagellar antigen complex.</title>
        <authorList>
            <person name="Masten B.J."/>
            <person name="Joys T.M."/>
        </authorList>
    </citation>
    <scope>NUCLEOTIDE SEQUENCE [GENOMIC DNA]</scope>
    <source>
        <strain>ATCC 15480 / HWS 51</strain>
    </source>
</reference>
<protein>
    <recommendedName>
        <fullName>Flagellin</fullName>
    </recommendedName>
    <alternativeName>
        <fullName>Phase 1-C flagellin</fullName>
    </alternativeName>
</protein>
<feature type="initiator methionine" description="Removed" evidence="1">
    <location>
        <position position="1"/>
    </location>
</feature>
<feature type="chain" id="PRO_0000182567" description="Flagellin">
    <location>
        <begin position="2"/>
        <end position="505"/>
    </location>
</feature>
<feature type="helix" evidence="3">
    <location>
        <begin position="66"/>
        <end position="101"/>
    </location>
</feature>
<feature type="helix" evidence="3">
    <location>
        <begin position="106"/>
        <end position="129"/>
    </location>
</feature>
<feature type="strand" evidence="3">
    <location>
        <begin position="142"/>
        <end position="147"/>
    </location>
</feature>
<feature type="strand" evidence="3">
    <location>
        <begin position="155"/>
        <end position="160"/>
    </location>
</feature>
<feature type="turn" evidence="3">
    <location>
        <begin position="165"/>
        <end position="169"/>
    </location>
</feature>
<feature type="helix" evidence="3">
    <location>
        <begin position="183"/>
        <end position="189"/>
    </location>
</feature>
<feature type="strand" evidence="3">
    <location>
        <begin position="194"/>
        <end position="201"/>
    </location>
</feature>
<feature type="strand" evidence="3">
    <location>
        <begin position="204"/>
        <end position="212"/>
    </location>
</feature>
<feature type="strand" evidence="3">
    <location>
        <begin position="215"/>
        <end position="221"/>
    </location>
</feature>
<feature type="turn" evidence="3">
    <location>
        <begin position="229"/>
        <end position="231"/>
    </location>
</feature>
<feature type="strand" evidence="3">
    <location>
        <begin position="234"/>
        <end position="236"/>
    </location>
</feature>
<feature type="strand" evidence="3">
    <location>
        <begin position="238"/>
        <end position="240"/>
    </location>
</feature>
<feature type="helix" evidence="3">
    <location>
        <begin position="353"/>
        <end position="358"/>
    </location>
</feature>
<feature type="strand" evidence="3">
    <location>
        <begin position="366"/>
        <end position="372"/>
    </location>
</feature>
<feature type="strand" evidence="3">
    <location>
        <begin position="374"/>
        <end position="377"/>
    </location>
</feature>
<feature type="strand" evidence="3">
    <location>
        <begin position="384"/>
        <end position="388"/>
    </location>
</feature>
<feature type="strand" evidence="3">
    <location>
        <begin position="390"/>
        <end position="395"/>
    </location>
</feature>
<feature type="strand" evidence="3">
    <location>
        <begin position="401"/>
        <end position="405"/>
    </location>
</feature>
<feature type="helix" evidence="3">
    <location>
        <begin position="406"/>
        <end position="409"/>
    </location>
</feature>
<feature type="strand" evidence="3">
    <location>
        <begin position="410"/>
        <end position="412"/>
    </location>
</feature>
<feature type="helix" evidence="3">
    <location>
        <begin position="418"/>
        <end position="451"/>
    </location>
</feature>
<feature type="turn" evidence="3">
    <location>
        <begin position="457"/>
        <end position="459"/>
    </location>
</feature>
<keyword id="KW-0002">3D-structure</keyword>
<keyword id="KW-0975">Bacterial flagellum</keyword>
<keyword id="KW-0964">Secreted</keyword>